<name>HEM1_CHLAD</name>
<proteinExistence type="inferred from homology"/>
<keyword id="KW-0149">Chlorophyll biosynthesis</keyword>
<keyword id="KW-0521">NADP</keyword>
<keyword id="KW-0560">Oxidoreductase</keyword>
<keyword id="KW-0627">Porphyrin biosynthesis</keyword>
<accession>B8G817</accession>
<dbReference type="EC" id="1.2.1.70" evidence="1"/>
<dbReference type="EMBL" id="CP001337">
    <property type="protein sequence ID" value="ACL24196.1"/>
    <property type="molecule type" value="Genomic_DNA"/>
</dbReference>
<dbReference type="RefSeq" id="WP_012616560.1">
    <property type="nucleotide sequence ID" value="NC_011831.1"/>
</dbReference>
<dbReference type="SMR" id="B8G817"/>
<dbReference type="STRING" id="326427.Cagg_1288"/>
<dbReference type="KEGG" id="cag:Cagg_1288"/>
<dbReference type="eggNOG" id="COG0373">
    <property type="taxonomic scope" value="Bacteria"/>
</dbReference>
<dbReference type="HOGENOM" id="CLU_035113_2_2_0"/>
<dbReference type="OrthoDB" id="110209at2"/>
<dbReference type="UniPathway" id="UPA00251">
    <property type="reaction ID" value="UER00316"/>
</dbReference>
<dbReference type="UniPathway" id="UPA00668"/>
<dbReference type="Proteomes" id="UP000002508">
    <property type="component" value="Chromosome"/>
</dbReference>
<dbReference type="GO" id="GO:0008883">
    <property type="term" value="F:glutamyl-tRNA reductase activity"/>
    <property type="evidence" value="ECO:0007669"/>
    <property type="project" value="UniProtKB-UniRule"/>
</dbReference>
<dbReference type="GO" id="GO:0050661">
    <property type="term" value="F:NADP binding"/>
    <property type="evidence" value="ECO:0007669"/>
    <property type="project" value="InterPro"/>
</dbReference>
<dbReference type="GO" id="GO:0015995">
    <property type="term" value="P:chlorophyll biosynthetic process"/>
    <property type="evidence" value="ECO:0007669"/>
    <property type="project" value="UniProtKB-UniRule"/>
</dbReference>
<dbReference type="GO" id="GO:0019353">
    <property type="term" value="P:protoporphyrinogen IX biosynthetic process from glutamate"/>
    <property type="evidence" value="ECO:0007669"/>
    <property type="project" value="TreeGrafter"/>
</dbReference>
<dbReference type="CDD" id="cd05213">
    <property type="entry name" value="NAD_bind_Glutamyl_tRNA_reduct"/>
    <property type="match status" value="1"/>
</dbReference>
<dbReference type="FunFam" id="3.30.460.30:FF:000001">
    <property type="entry name" value="Glutamyl-tRNA reductase"/>
    <property type="match status" value="1"/>
</dbReference>
<dbReference type="FunFam" id="3.40.50.720:FF:000031">
    <property type="entry name" value="Glutamyl-tRNA reductase"/>
    <property type="match status" value="1"/>
</dbReference>
<dbReference type="Gene3D" id="3.30.460.30">
    <property type="entry name" value="Glutamyl-tRNA reductase, N-terminal domain"/>
    <property type="match status" value="1"/>
</dbReference>
<dbReference type="Gene3D" id="3.40.50.720">
    <property type="entry name" value="NAD(P)-binding Rossmann-like Domain"/>
    <property type="match status" value="1"/>
</dbReference>
<dbReference type="HAMAP" id="MF_00087">
    <property type="entry name" value="Glu_tRNA_reductase"/>
    <property type="match status" value="1"/>
</dbReference>
<dbReference type="InterPro" id="IPR000343">
    <property type="entry name" value="4pyrrol_synth_GluRdtase"/>
</dbReference>
<dbReference type="InterPro" id="IPR015896">
    <property type="entry name" value="4pyrrol_synth_GluRdtase_dimer"/>
</dbReference>
<dbReference type="InterPro" id="IPR015895">
    <property type="entry name" value="4pyrrol_synth_GluRdtase_N"/>
</dbReference>
<dbReference type="InterPro" id="IPR036453">
    <property type="entry name" value="GluRdtase_dimer_dom_sf"/>
</dbReference>
<dbReference type="InterPro" id="IPR036343">
    <property type="entry name" value="GluRdtase_N_sf"/>
</dbReference>
<dbReference type="InterPro" id="IPR036291">
    <property type="entry name" value="NAD(P)-bd_dom_sf"/>
</dbReference>
<dbReference type="InterPro" id="IPR006151">
    <property type="entry name" value="Shikm_DH/Glu-tRNA_Rdtase"/>
</dbReference>
<dbReference type="NCBIfam" id="TIGR01035">
    <property type="entry name" value="hemA"/>
    <property type="match status" value="1"/>
</dbReference>
<dbReference type="PANTHER" id="PTHR43013">
    <property type="entry name" value="GLUTAMYL-TRNA REDUCTASE"/>
    <property type="match status" value="1"/>
</dbReference>
<dbReference type="PANTHER" id="PTHR43013:SF1">
    <property type="entry name" value="GLUTAMYL-TRNA REDUCTASE"/>
    <property type="match status" value="1"/>
</dbReference>
<dbReference type="Pfam" id="PF00745">
    <property type="entry name" value="GlutR_dimer"/>
    <property type="match status" value="1"/>
</dbReference>
<dbReference type="Pfam" id="PF05201">
    <property type="entry name" value="GlutR_N"/>
    <property type="match status" value="1"/>
</dbReference>
<dbReference type="Pfam" id="PF01488">
    <property type="entry name" value="Shikimate_DH"/>
    <property type="match status" value="1"/>
</dbReference>
<dbReference type="PIRSF" id="PIRSF000445">
    <property type="entry name" value="4pyrrol_synth_GluRdtase"/>
    <property type="match status" value="1"/>
</dbReference>
<dbReference type="SUPFAM" id="SSF69742">
    <property type="entry name" value="Glutamyl tRNA-reductase catalytic, N-terminal domain"/>
    <property type="match status" value="1"/>
</dbReference>
<dbReference type="SUPFAM" id="SSF69075">
    <property type="entry name" value="Glutamyl tRNA-reductase dimerization domain"/>
    <property type="match status" value="1"/>
</dbReference>
<dbReference type="SUPFAM" id="SSF51735">
    <property type="entry name" value="NAD(P)-binding Rossmann-fold domains"/>
    <property type="match status" value="1"/>
</dbReference>
<reference key="1">
    <citation type="submission" date="2008-12" db="EMBL/GenBank/DDBJ databases">
        <title>Complete sequence of Chloroflexus aggregans DSM 9485.</title>
        <authorList>
            <consortium name="US DOE Joint Genome Institute"/>
            <person name="Lucas S."/>
            <person name="Copeland A."/>
            <person name="Lapidus A."/>
            <person name="Glavina del Rio T."/>
            <person name="Dalin E."/>
            <person name="Tice H."/>
            <person name="Pitluck S."/>
            <person name="Foster B."/>
            <person name="Larimer F."/>
            <person name="Land M."/>
            <person name="Hauser L."/>
            <person name="Kyrpides N."/>
            <person name="Mikhailova N."/>
            <person name="Bryant D.A."/>
            <person name="Richardson P."/>
        </authorList>
    </citation>
    <scope>NUCLEOTIDE SEQUENCE [LARGE SCALE GENOMIC DNA]</scope>
    <source>
        <strain>MD-66 / DSM 9485</strain>
    </source>
</reference>
<comment type="function">
    <text evidence="1">Catalyzes the NADPH-dependent reduction of glutamyl-tRNA(Glu) to glutamate 1-semialdehyde (GSA).</text>
</comment>
<comment type="catalytic activity">
    <reaction evidence="1">
        <text>(S)-4-amino-5-oxopentanoate + tRNA(Glu) + NADP(+) = L-glutamyl-tRNA(Glu) + NADPH + H(+)</text>
        <dbReference type="Rhea" id="RHEA:12344"/>
        <dbReference type="Rhea" id="RHEA-COMP:9663"/>
        <dbReference type="Rhea" id="RHEA-COMP:9680"/>
        <dbReference type="ChEBI" id="CHEBI:15378"/>
        <dbReference type="ChEBI" id="CHEBI:57501"/>
        <dbReference type="ChEBI" id="CHEBI:57783"/>
        <dbReference type="ChEBI" id="CHEBI:58349"/>
        <dbReference type="ChEBI" id="CHEBI:78442"/>
        <dbReference type="ChEBI" id="CHEBI:78520"/>
        <dbReference type="EC" id="1.2.1.70"/>
    </reaction>
</comment>
<comment type="pathway">
    <text evidence="1">Porphyrin-containing compound metabolism; protoporphyrin-IX biosynthesis; 5-aminolevulinate from L-glutamyl-tRNA(Glu): step 1/2.</text>
</comment>
<comment type="pathway">
    <text evidence="1">Porphyrin-containing compound metabolism; chlorophyll biosynthesis.</text>
</comment>
<comment type="subunit">
    <text evidence="1">Homodimer.</text>
</comment>
<comment type="domain">
    <text evidence="1">Possesses an unusual extended V-shaped dimeric structure with each monomer consisting of three distinct domains arranged along a curved 'spinal' alpha-helix. The N-terminal catalytic domain specifically recognizes the glutamate moiety of the substrate. The second domain is the NADPH-binding domain, and the third C-terminal domain is responsible for dimerization.</text>
</comment>
<comment type="miscellaneous">
    <text evidence="1">During catalysis, the active site Cys acts as a nucleophile attacking the alpha-carbonyl group of tRNA-bound glutamate with the formation of a thioester intermediate between enzyme and glutamate, and the concomitant release of tRNA(Glu). The thioester intermediate is finally reduced by direct hydride transfer from NADPH, to form the product GSA.</text>
</comment>
<comment type="similarity">
    <text evidence="1">Belongs to the glutamyl-tRNA reductase family.</text>
</comment>
<feature type="chain" id="PRO_1000190511" description="Glutamyl-tRNA reductase">
    <location>
        <begin position="1"/>
        <end position="453"/>
    </location>
</feature>
<feature type="active site" description="Nucleophile" evidence="1">
    <location>
        <position position="55"/>
    </location>
</feature>
<feature type="binding site" evidence="1">
    <location>
        <begin position="54"/>
        <end position="57"/>
    </location>
    <ligand>
        <name>substrate</name>
    </ligand>
</feature>
<feature type="binding site" evidence="1">
    <location>
        <position position="113"/>
    </location>
    <ligand>
        <name>substrate</name>
    </ligand>
</feature>
<feature type="binding site" evidence="1">
    <location>
        <begin position="118"/>
        <end position="120"/>
    </location>
    <ligand>
        <name>substrate</name>
    </ligand>
</feature>
<feature type="binding site" evidence="1">
    <location>
        <position position="124"/>
    </location>
    <ligand>
        <name>substrate</name>
    </ligand>
</feature>
<feature type="binding site" evidence="1">
    <location>
        <begin position="193"/>
        <end position="198"/>
    </location>
    <ligand>
        <name>NADP(+)</name>
        <dbReference type="ChEBI" id="CHEBI:58349"/>
    </ligand>
</feature>
<feature type="site" description="Important for activity" evidence="1">
    <location>
        <position position="103"/>
    </location>
</feature>
<protein>
    <recommendedName>
        <fullName evidence="1">Glutamyl-tRNA reductase</fullName>
        <shortName evidence="1">GluTR</shortName>
        <ecNumber evidence="1">1.2.1.70</ecNumber>
    </recommendedName>
</protein>
<sequence length="453" mass="49496">MNLFLAGLDHTTAPVEIREQLAFSQTDLPSALLQLTQADNGSPPLFTEAVILSTCNRVEIYGVANPGTTAQHVVDFLANFHRRPAGSFVHTLYFYQGEAVARHLCATAAGLRSLVLGEAQIQGQVRSAYEAAQRIGSVGSVLHRLFQIALVAGKRVRHETTIGKGAASVSQAGVELARRRLGDLRGREVLLIGGGEVSELAAQNLIANGADRLTIVNRTSSRAAALAERYGAEMLDFGALPEALARADIVISSTAAPVPIIYRHHIAEALSHKQRMRACGDCDPPAMLLIDLAVPRDIAADVAELPGVYLFTVDDLREVVSHTIELRSAVIDIANQIVEEQVREFSDWLRTQEALPVLTMLRQRAEEVRNEELTRALRRLHDLSPEQRAVIEGLSRSIVNKLLHPPTRCLREAAAHGQGKRYATMLAELFNLEHALEHKAGAMGNTELTDRMR</sequence>
<evidence type="ECO:0000255" key="1">
    <source>
        <dbReference type="HAMAP-Rule" id="MF_00087"/>
    </source>
</evidence>
<gene>
    <name evidence="1" type="primary">hemA</name>
    <name type="ordered locus">Cagg_1288</name>
</gene>
<organism>
    <name type="scientific">Chloroflexus aggregans (strain MD-66 / DSM 9485)</name>
    <dbReference type="NCBI Taxonomy" id="326427"/>
    <lineage>
        <taxon>Bacteria</taxon>
        <taxon>Bacillati</taxon>
        <taxon>Chloroflexota</taxon>
        <taxon>Chloroflexia</taxon>
        <taxon>Chloroflexales</taxon>
        <taxon>Chloroflexineae</taxon>
        <taxon>Chloroflexaceae</taxon>
        <taxon>Chloroflexus</taxon>
    </lineage>
</organism>